<reference key="1">
    <citation type="journal article" date="2007" name="PLoS Genet.">
        <title>The complete genome sequence of Yersinia pseudotuberculosis IP31758, the causative agent of Far East scarlet-like fever.</title>
        <authorList>
            <person name="Eppinger M."/>
            <person name="Rosovitz M.J."/>
            <person name="Fricke W.F."/>
            <person name="Rasko D.A."/>
            <person name="Kokorina G."/>
            <person name="Fayolle C."/>
            <person name="Lindler L.E."/>
            <person name="Carniel E."/>
            <person name="Ravel J."/>
        </authorList>
    </citation>
    <scope>NUCLEOTIDE SEQUENCE [LARGE SCALE GENOMIC DNA]</scope>
    <source>
        <strain>IP 31758</strain>
    </source>
</reference>
<comment type="function">
    <text evidence="2">With S4 and S5 plays an important role in translational accuracy.</text>
</comment>
<comment type="function">
    <text evidence="2">Interacts with and stabilizes bases of the 16S rRNA that are involved in tRNA selection in the A site and with the mRNA backbone. Located at the interface of the 30S and 50S subunits, it traverses the body of the 30S subunit contacting proteins on the other side and probably holding the rRNA structure together. The combined cluster of proteins S8, S12 and S17 appears to hold together the shoulder and platform of the 30S subunit.</text>
</comment>
<comment type="subunit">
    <text evidence="2">Part of the 30S ribosomal subunit. Contacts proteins S8 and S17. May interact with IF1 in the 30S initiation complex.</text>
</comment>
<comment type="similarity">
    <text evidence="2">Belongs to the universal ribosomal protein uS12 family.</text>
</comment>
<keyword id="KW-0488">Methylation</keyword>
<keyword id="KW-0687">Ribonucleoprotein</keyword>
<keyword id="KW-0689">Ribosomal protein</keyword>
<keyword id="KW-0694">RNA-binding</keyword>
<keyword id="KW-0699">rRNA-binding</keyword>
<keyword id="KW-0820">tRNA-binding</keyword>
<feature type="chain" id="PRO_1000060820" description="Small ribosomal subunit protein uS12">
    <location>
        <begin position="1"/>
        <end position="124"/>
    </location>
</feature>
<feature type="modified residue" description="3-methylthioaspartic acid" evidence="1">
    <location>
        <position position="89"/>
    </location>
</feature>
<sequence length="124" mass="13730">MATINQLVRKPRSMKVAKSNVPALEACPQKRGVCTRVYTTTPKKPNSALRKVCRVRLTNGFEVTSYIGGEGHNLQEHSVILIRGGRVKDLPGVRYHTVRGALDCSGVKDRKQSRSKYGVKKPKA</sequence>
<name>RS12_YERP3</name>
<gene>
    <name evidence="2" type="primary">rpsL</name>
    <name type="ordered locus">YpsIP31758_3921</name>
</gene>
<protein>
    <recommendedName>
        <fullName evidence="2">Small ribosomal subunit protein uS12</fullName>
    </recommendedName>
    <alternativeName>
        <fullName evidence="3">30S ribosomal protein S12</fullName>
    </alternativeName>
</protein>
<accession>A7FNP1</accession>
<proteinExistence type="inferred from homology"/>
<evidence type="ECO:0000250" key="1"/>
<evidence type="ECO:0000255" key="2">
    <source>
        <dbReference type="HAMAP-Rule" id="MF_00403"/>
    </source>
</evidence>
<evidence type="ECO:0000305" key="3"/>
<dbReference type="EMBL" id="CP000720">
    <property type="protein sequence ID" value="ABS49118.1"/>
    <property type="molecule type" value="Genomic_DNA"/>
</dbReference>
<dbReference type="RefSeq" id="WP_002212323.1">
    <property type="nucleotide sequence ID" value="NC_009708.1"/>
</dbReference>
<dbReference type="SMR" id="A7FNP1"/>
<dbReference type="GeneID" id="97454224"/>
<dbReference type="KEGG" id="ypi:YpsIP31758_3921"/>
<dbReference type="HOGENOM" id="CLU_104295_1_2_6"/>
<dbReference type="Proteomes" id="UP000002412">
    <property type="component" value="Chromosome"/>
</dbReference>
<dbReference type="GO" id="GO:0015935">
    <property type="term" value="C:small ribosomal subunit"/>
    <property type="evidence" value="ECO:0007669"/>
    <property type="project" value="InterPro"/>
</dbReference>
<dbReference type="GO" id="GO:0019843">
    <property type="term" value="F:rRNA binding"/>
    <property type="evidence" value="ECO:0007669"/>
    <property type="project" value="UniProtKB-UniRule"/>
</dbReference>
<dbReference type="GO" id="GO:0003735">
    <property type="term" value="F:structural constituent of ribosome"/>
    <property type="evidence" value="ECO:0007669"/>
    <property type="project" value="InterPro"/>
</dbReference>
<dbReference type="GO" id="GO:0000049">
    <property type="term" value="F:tRNA binding"/>
    <property type="evidence" value="ECO:0007669"/>
    <property type="project" value="UniProtKB-UniRule"/>
</dbReference>
<dbReference type="GO" id="GO:0006412">
    <property type="term" value="P:translation"/>
    <property type="evidence" value="ECO:0007669"/>
    <property type="project" value="UniProtKB-UniRule"/>
</dbReference>
<dbReference type="CDD" id="cd03368">
    <property type="entry name" value="Ribosomal_S12"/>
    <property type="match status" value="1"/>
</dbReference>
<dbReference type="FunFam" id="2.40.50.140:FF:000001">
    <property type="entry name" value="30S ribosomal protein S12"/>
    <property type="match status" value="1"/>
</dbReference>
<dbReference type="Gene3D" id="2.40.50.140">
    <property type="entry name" value="Nucleic acid-binding proteins"/>
    <property type="match status" value="1"/>
</dbReference>
<dbReference type="HAMAP" id="MF_00403_B">
    <property type="entry name" value="Ribosomal_uS12_B"/>
    <property type="match status" value="1"/>
</dbReference>
<dbReference type="InterPro" id="IPR012340">
    <property type="entry name" value="NA-bd_OB-fold"/>
</dbReference>
<dbReference type="InterPro" id="IPR006032">
    <property type="entry name" value="Ribosomal_uS12"/>
</dbReference>
<dbReference type="InterPro" id="IPR005679">
    <property type="entry name" value="Ribosomal_uS12_bac"/>
</dbReference>
<dbReference type="NCBIfam" id="TIGR00981">
    <property type="entry name" value="rpsL_bact"/>
    <property type="match status" value="1"/>
</dbReference>
<dbReference type="PANTHER" id="PTHR11652">
    <property type="entry name" value="30S RIBOSOMAL PROTEIN S12 FAMILY MEMBER"/>
    <property type="match status" value="1"/>
</dbReference>
<dbReference type="Pfam" id="PF00164">
    <property type="entry name" value="Ribosom_S12_S23"/>
    <property type="match status" value="1"/>
</dbReference>
<dbReference type="PIRSF" id="PIRSF002133">
    <property type="entry name" value="Ribosomal_S12/S23"/>
    <property type="match status" value="1"/>
</dbReference>
<dbReference type="PRINTS" id="PR01034">
    <property type="entry name" value="RIBOSOMALS12"/>
</dbReference>
<dbReference type="SUPFAM" id="SSF50249">
    <property type="entry name" value="Nucleic acid-binding proteins"/>
    <property type="match status" value="1"/>
</dbReference>
<dbReference type="PROSITE" id="PS00055">
    <property type="entry name" value="RIBOSOMAL_S12"/>
    <property type="match status" value="1"/>
</dbReference>
<organism>
    <name type="scientific">Yersinia pseudotuberculosis serotype O:1b (strain IP 31758)</name>
    <dbReference type="NCBI Taxonomy" id="349747"/>
    <lineage>
        <taxon>Bacteria</taxon>
        <taxon>Pseudomonadati</taxon>
        <taxon>Pseudomonadota</taxon>
        <taxon>Gammaproteobacteria</taxon>
        <taxon>Enterobacterales</taxon>
        <taxon>Yersiniaceae</taxon>
        <taxon>Yersinia</taxon>
    </lineage>
</organism>